<comment type="function">
    <text evidence="1">Catalyzes the transfer of an acyl group from acyl-phosphate (acyl-PO(4)) to glycerol-3-phosphate (G3P) to form lysophosphatidic acid (LPA). This enzyme utilizes acyl-phosphate as fatty acyl donor, but not acyl-CoA or acyl-ACP.</text>
</comment>
<comment type="catalytic activity">
    <reaction evidence="1">
        <text>an acyl phosphate + sn-glycerol 3-phosphate = a 1-acyl-sn-glycero-3-phosphate + phosphate</text>
        <dbReference type="Rhea" id="RHEA:34075"/>
        <dbReference type="ChEBI" id="CHEBI:43474"/>
        <dbReference type="ChEBI" id="CHEBI:57597"/>
        <dbReference type="ChEBI" id="CHEBI:57970"/>
        <dbReference type="ChEBI" id="CHEBI:59918"/>
        <dbReference type="EC" id="2.3.1.275"/>
    </reaction>
</comment>
<comment type="pathway">
    <text evidence="1">Lipid metabolism; phospholipid metabolism.</text>
</comment>
<comment type="subunit">
    <text evidence="1">Probably interacts with PlsX.</text>
</comment>
<comment type="subcellular location">
    <subcellularLocation>
        <location evidence="1">Cell membrane</location>
        <topology evidence="1">Multi-pass membrane protein</topology>
    </subcellularLocation>
</comment>
<comment type="similarity">
    <text evidence="1">Belongs to the PlsY family.</text>
</comment>
<dbReference type="EC" id="2.3.1.275" evidence="1"/>
<dbReference type="EMBL" id="BX293980">
    <property type="protein sequence ID" value="CAE76764.1"/>
    <property type="molecule type" value="Genomic_DNA"/>
</dbReference>
<dbReference type="RefSeq" id="NP_975122.1">
    <property type="nucleotide sequence ID" value="NC_005364.2"/>
</dbReference>
<dbReference type="RefSeq" id="WP_011166321.1">
    <property type="nucleotide sequence ID" value="NC_005364.2"/>
</dbReference>
<dbReference type="SMR" id="Q6MUC0"/>
<dbReference type="STRING" id="272632.MSC_0112"/>
<dbReference type="KEGG" id="mmy:MSC_0112"/>
<dbReference type="PATRIC" id="fig|272632.4.peg.116"/>
<dbReference type="eggNOG" id="COG0344">
    <property type="taxonomic scope" value="Bacteria"/>
</dbReference>
<dbReference type="HOGENOM" id="CLU_081254_3_0_14"/>
<dbReference type="UniPathway" id="UPA00085"/>
<dbReference type="Proteomes" id="UP000001016">
    <property type="component" value="Chromosome"/>
</dbReference>
<dbReference type="GO" id="GO:0005886">
    <property type="term" value="C:plasma membrane"/>
    <property type="evidence" value="ECO:0007669"/>
    <property type="project" value="UniProtKB-SubCell"/>
</dbReference>
<dbReference type="GO" id="GO:0043772">
    <property type="term" value="F:acyl-phosphate glycerol-3-phosphate acyltransferase activity"/>
    <property type="evidence" value="ECO:0007669"/>
    <property type="project" value="UniProtKB-UniRule"/>
</dbReference>
<dbReference type="GO" id="GO:0008654">
    <property type="term" value="P:phospholipid biosynthetic process"/>
    <property type="evidence" value="ECO:0007669"/>
    <property type="project" value="UniProtKB-UniRule"/>
</dbReference>
<dbReference type="HAMAP" id="MF_01043">
    <property type="entry name" value="PlsY"/>
    <property type="match status" value="1"/>
</dbReference>
<dbReference type="InterPro" id="IPR003811">
    <property type="entry name" value="G3P_acylTferase_PlsY"/>
</dbReference>
<dbReference type="NCBIfam" id="TIGR00023">
    <property type="entry name" value="glycerol-3-phosphate 1-O-acyltransferase PlsY"/>
    <property type="match status" value="1"/>
</dbReference>
<dbReference type="NCBIfam" id="NF010976">
    <property type="entry name" value="PRK14399.1"/>
    <property type="match status" value="1"/>
</dbReference>
<dbReference type="PANTHER" id="PTHR30309:SF0">
    <property type="entry name" value="GLYCEROL-3-PHOSPHATE ACYLTRANSFERASE-RELATED"/>
    <property type="match status" value="1"/>
</dbReference>
<dbReference type="PANTHER" id="PTHR30309">
    <property type="entry name" value="INNER MEMBRANE PROTEIN YGIH"/>
    <property type="match status" value="1"/>
</dbReference>
<dbReference type="Pfam" id="PF02660">
    <property type="entry name" value="G3P_acyltransf"/>
    <property type="match status" value="1"/>
</dbReference>
<dbReference type="SMART" id="SM01207">
    <property type="entry name" value="G3P_acyltransf"/>
    <property type="match status" value="1"/>
</dbReference>
<name>PLSY_MYCMS</name>
<gene>
    <name evidence="1" type="primary">plsY</name>
    <name type="ordered locus">MSC_0112</name>
</gene>
<evidence type="ECO:0000255" key="1">
    <source>
        <dbReference type="HAMAP-Rule" id="MF_01043"/>
    </source>
</evidence>
<accession>Q6MUC0</accession>
<protein>
    <recommendedName>
        <fullName evidence="1">Glycerol-3-phosphate acyltransferase</fullName>
    </recommendedName>
    <alternativeName>
        <fullName evidence="1">Acyl-PO4 G3P acyltransferase</fullName>
    </alternativeName>
    <alternativeName>
        <fullName evidence="1">Acyl-phosphate--glycerol-3-phosphate acyltransferase</fullName>
    </alternativeName>
    <alternativeName>
        <fullName evidence="1">G3P acyltransferase</fullName>
        <shortName evidence="1">GPAT</shortName>
        <ecNumber evidence="1">2.3.1.275</ecNumber>
    </alternativeName>
    <alternativeName>
        <fullName evidence="1">Lysophosphatidic acid synthase</fullName>
        <shortName evidence="1">LPA synthase</shortName>
    </alternativeName>
</protein>
<proteinExistence type="inferred from homology"/>
<sequence>MKGFYMYYLGIILASVIGYFLGSISWSIIIVKKVGNIDIRTVGSGNPGATNTVRTLGKKWGLVVAFLDALKVVFTAIVAILLSMIPNDLFSQTSYFIPCIFALIGHCYPIYYKFKGGKAVSCFLGLLFVVNVLYLIIFLIIWFISVAISRKVSVASMFSALIILLIMWIPYLSGVSYFIWEWNGLEKFRVAWKNYILFSLLNSFHYWFSNTWASGILEGNIIILIGGLILAWRHSQNIKRIKNKTEPDTFPKKVKPVR</sequence>
<keyword id="KW-1003">Cell membrane</keyword>
<keyword id="KW-0444">Lipid biosynthesis</keyword>
<keyword id="KW-0443">Lipid metabolism</keyword>
<keyword id="KW-0472">Membrane</keyword>
<keyword id="KW-0594">Phospholipid biosynthesis</keyword>
<keyword id="KW-1208">Phospholipid metabolism</keyword>
<keyword id="KW-1185">Reference proteome</keyword>
<keyword id="KW-0808">Transferase</keyword>
<keyword id="KW-0812">Transmembrane</keyword>
<keyword id="KW-1133">Transmembrane helix</keyword>
<feature type="chain" id="PRO_0000188404" description="Glycerol-3-phosphate acyltransferase">
    <location>
        <begin position="1"/>
        <end position="258"/>
    </location>
</feature>
<feature type="transmembrane region" description="Helical" evidence="1">
    <location>
        <begin position="11"/>
        <end position="31"/>
    </location>
</feature>
<feature type="transmembrane region" description="Helical" evidence="1">
    <location>
        <begin position="62"/>
        <end position="82"/>
    </location>
</feature>
<feature type="transmembrane region" description="Helical" evidence="1">
    <location>
        <begin position="94"/>
        <end position="114"/>
    </location>
</feature>
<feature type="transmembrane region" description="Helical" evidence="1">
    <location>
        <begin position="124"/>
        <end position="144"/>
    </location>
</feature>
<feature type="transmembrane region" description="Helical" evidence="1">
    <location>
        <begin position="160"/>
        <end position="180"/>
    </location>
</feature>
<feature type="transmembrane region" description="Helical" evidence="1">
    <location>
        <begin position="212"/>
        <end position="232"/>
    </location>
</feature>
<organism>
    <name type="scientific">Mycoplasma mycoides subsp. mycoides SC (strain CCUG 32753 / NCTC 10114 / PG1)</name>
    <dbReference type="NCBI Taxonomy" id="272632"/>
    <lineage>
        <taxon>Bacteria</taxon>
        <taxon>Bacillati</taxon>
        <taxon>Mycoplasmatota</taxon>
        <taxon>Mollicutes</taxon>
        <taxon>Mycoplasmataceae</taxon>
        <taxon>Mycoplasma</taxon>
    </lineage>
</organism>
<reference key="1">
    <citation type="journal article" date="2004" name="Genome Res.">
        <title>The genome sequence of Mycoplasma mycoides subsp. mycoides SC type strain PG1T, the causative agent of contagious bovine pleuropneumonia (CBPP).</title>
        <authorList>
            <person name="Westberg J."/>
            <person name="Persson A."/>
            <person name="Holmberg A."/>
            <person name="Goesmann A."/>
            <person name="Lundeberg J."/>
            <person name="Johansson K.-E."/>
            <person name="Pettersson B."/>
            <person name="Uhlen M."/>
        </authorList>
    </citation>
    <scope>NUCLEOTIDE SEQUENCE [LARGE SCALE GENOMIC DNA]</scope>
    <source>
        <strain>CCUG 32753 / NCTC 10114 / PG1</strain>
    </source>
</reference>